<accession>P0CL49</accession>
<accession>P0A2J7</accession>
<accession>Q56060</accession>
<proteinExistence type="inferred from homology"/>
<protein>
    <recommendedName>
        <fullName>Spermidine/putrescine transport system permease protein PotB</fullName>
    </recommendedName>
</protein>
<organism>
    <name type="scientific">Salmonella typhimurium (strain LT2 / SGSC1412 / ATCC 700720)</name>
    <dbReference type="NCBI Taxonomy" id="99287"/>
    <lineage>
        <taxon>Bacteria</taxon>
        <taxon>Pseudomonadati</taxon>
        <taxon>Pseudomonadota</taxon>
        <taxon>Gammaproteobacteria</taxon>
        <taxon>Enterobacterales</taxon>
        <taxon>Enterobacteriaceae</taxon>
        <taxon>Salmonella</taxon>
    </lineage>
</organism>
<feature type="chain" id="PRO_0000060176" description="Spermidine/putrescine transport system permease protein PotB">
    <location>
        <begin position="1"/>
        <end position="287"/>
    </location>
</feature>
<feature type="topological domain" description="Cytoplasmic" evidence="2">
    <location>
        <begin position="1"/>
        <end position="10"/>
    </location>
</feature>
<feature type="transmembrane region" description="Helical" evidence="3">
    <location>
        <begin position="11"/>
        <end position="31"/>
    </location>
</feature>
<feature type="topological domain" description="Periplasmic" evidence="2">
    <location>
        <begin position="32"/>
        <end position="70"/>
    </location>
</feature>
<feature type="transmembrane region" description="Helical" evidence="3">
    <location>
        <begin position="71"/>
        <end position="91"/>
    </location>
</feature>
<feature type="topological domain" description="Cytoplasmic" evidence="2">
    <location>
        <begin position="92"/>
        <end position="99"/>
    </location>
</feature>
<feature type="transmembrane region" description="Helical" evidence="3">
    <location>
        <begin position="100"/>
        <end position="120"/>
    </location>
</feature>
<feature type="topological domain" description="Periplasmic" evidence="2">
    <location>
        <begin position="121"/>
        <end position="145"/>
    </location>
</feature>
<feature type="transmembrane region" description="Helical" evidence="3">
    <location>
        <begin position="146"/>
        <end position="166"/>
    </location>
</feature>
<feature type="topological domain" description="Cytoplasmic" evidence="2">
    <location>
        <begin position="167"/>
        <end position="197"/>
    </location>
</feature>
<feature type="transmembrane region" description="Helical" evidence="3">
    <location>
        <begin position="198"/>
        <end position="218"/>
    </location>
</feature>
<feature type="topological domain" description="Periplasmic" evidence="2">
    <location>
        <begin position="219"/>
        <end position="251"/>
    </location>
</feature>
<feature type="transmembrane region" description="Helical" evidence="3">
    <location>
        <begin position="252"/>
        <end position="272"/>
    </location>
</feature>
<feature type="topological domain" description="Cytoplasmic" evidence="2">
    <location>
        <begin position="273"/>
        <end position="287"/>
    </location>
</feature>
<feature type="domain" description="ABC transmembrane type-1" evidence="3">
    <location>
        <begin position="65"/>
        <end position="271"/>
    </location>
</feature>
<dbReference type="EMBL" id="AE006468">
    <property type="protein sequence ID" value="AAL20154.1"/>
    <property type="molecule type" value="Genomic_DNA"/>
</dbReference>
<dbReference type="RefSeq" id="NP_460195.1">
    <property type="nucleotide sequence ID" value="NC_003197.2"/>
</dbReference>
<dbReference type="RefSeq" id="WP_000799391.1">
    <property type="nucleotide sequence ID" value="NC_003197.2"/>
</dbReference>
<dbReference type="SMR" id="P0CL49"/>
<dbReference type="STRING" id="99287.STM1225"/>
<dbReference type="PaxDb" id="99287-STM1225"/>
<dbReference type="GeneID" id="1252743"/>
<dbReference type="KEGG" id="stm:STM1225"/>
<dbReference type="PATRIC" id="fig|99287.12.peg.1296"/>
<dbReference type="HOGENOM" id="CLU_016047_18_3_6"/>
<dbReference type="OMA" id="VIRTYAW"/>
<dbReference type="PhylomeDB" id="P0CL49"/>
<dbReference type="BioCyc" id="SENT99287:STM1225-MONOMER"/>
<dbReference type="Proteomes" id="UP000001014">
    <property type="component" value="Chromosome"/>
</dbReference>
<dbReference type="GO" id="GO:0005886">
    <property type="term" value="C:plasma membrane"/>
    <property type="evidence" value="ECO:0007669"/>
    <property type="project" value="UniProtKB-SubCell"/>
</dbReference>
<dbReference type="GO" id="GO:0055085">
    <property type="term" value="P:transmembrane transport"/>
    <property type="evidence" value="ECO:0007669"/>
    <property type="project" value="InterPro"/>
</dbReference>
<dbReference type="CDD" id="cd06261">
    <property type="entry name" value="TM_PBP2"/>
    <property type="match status" value="1"/>
</dbReference>
<dbReference type="FunFam" id="1.10.3720.10:FF:000029">
    <property type="entry name" value="Spermidine/putrescine ABC transporter permease PotB"/>
    <property type="match status" value="1"/>
</dbReference>
<dbReference type="Gene3D" id="1.10.3720.10">
    <property type="entry name" value="MetI-like"/>
    <property type="match status" value="1"/>
</dbReference>
<dbReference type="InterPro" id="IPR000515">
    <property type="entry name" value="MetI-like"/>
</dbReference>
<dbReference type="InterPro" id="IPR035906">
    <property type="entry name" value="MetI-like_sf"/>
</dbReference>
<dbReference type="NCBIfam" id="NF007044">
    <property type="entry name" value="PRK09497.1"/>
    <property type="match status" value="1"/>
</dbReference>
<dbReference type="PANTHER" id="PTHR42929:SF1">
    <property type="entry name" value="INNER MEMBRANE ABC TRANSPORTER PERMEASE PROTEIN YDCU-RELATED"/>
    <property type="match status" value="1"/>
</dbReference>
<dbReference type="PANTHER" id="PTHR42929">
    <property type="entry name" value="INNER MEMBRANE ABC TRANSPORTER PERMEASE PROTEIN YDCU-RELATED-RELATED"/>
    <property type="match status" value="1"/>
</dbReference>
<dbReference type="Pfam" id="PF00528">
    <property type="entry name" value="BPD_transp_1"/>
    <property type="match status" value="1"/>
</dbReference>
<dbReference type="SUPFAM" id="SSF161098">
    <property type="entry name" value="MetI-like"/>
    <property type="match status" value="1"/>
</dbReference>
<dbReference type="PROSITE" id="PS50928">
    <property type="entry name" value="ABC_TM1"/>
    <property type="match status" value="1"/>
</dbReference>
<sequence>MKNTSKFQNVVIVTIVGWLVLFVFLPNLMIIGTSFLTRDDASFVKMVFTLDNYARLLDPLYFEVLLHSLNMALIATLSCLVLGYPFAWFLAKLPEKIRPLLLFLLIVPFWTNSLIRIYGLKIFLSTKGYLNEFLLWLGVIDTPIRIMFTPSAVIIGLVYILLPFMVMPLYSSIEKLDKPLLEAARDLGASKMQTFIRIIIPLTMPGIVAGCLLVMLPAMGLFYVSDLMGGAKNLLIGNVIKVQFLNIRDWPFGAATSITLTIVMGLMLLIYWRASRLLNKKVSDISD</sequence>
<name>POTB_SALTY</name>
<comment type="function">
    <text evidence="1">Required for the activity of the bacterial periplasmic transport system of putrescine and spermidine.</text>
</comment>
<comment type="subcellular location">
    <subcellularLocation>
        <location evidence="1">Cell inner membrane</location>
        <topology evidence="3">Multi-pass membrane protein</topology>
    </subcellularLocation>
</comment>
<comment type="similarity">
    <text evidence="4">Belongs to the binding-protein-dependent transport system permease family. CysTW subfamily.</text>
</comment>
<reference key="1">
    <citation type="journal article" date="2001" name="Nature">
        <title>Complete genome sequence of Salmonella enterica serovar Typhimurium LT2.</title>
        <authorList>
            <person name="McClelland M."/>
            <person name="Sanderson K.E."/>
            <person name="Spieth J."/>
            <person name="Clifton S.W."/>
            <person name="Latreille P."/>
            <person name="Courtney L."/>
            <person name="Porwollik S."/>
            <person name="Ali J."/>
            <person name="Dante M."/>
            <person name="Du F."/>
            <person name="Hou S."/>
            <person name="Layman D."/>
            <person name="Leonard S."/>
            <person name="Nguyen C."/>
            <person name="Scott K."/>
            <person name="Holmes A."/>
            <person name="Grewal N."/>
            <person name="Mulvaney E."/>
            <person name="Ryan E."/>
            <person name="Sun H."/>
            <person name="Florea L."/>
            <person name="Miller W."/>
            <person name="Stoneking T."/>
            <person name="Nhan M."/>
            <person name="Waterston R."/>
            <person name="Wilson R.K."/>
        </authorList>
    </citation>
    <scope>NUCLEOTIDE SEQUENCE [LARGE SCALE GENOMIC DNA]</scope>
    <source>
        <strain>LT2 / SGSC1412 / ATCC 700720</strain>
    </source>
</reference>
<gene>
    <name type="primary">potB</name>
    <name type="ordered locus">STM1225</name>
</gene>
<keyword id="KW-0997">Cell inner membrane</keyword>
<keyword id="KW-1003">Cell membrane</keyword>
<keyword id="KW-0472">Membrane</keyword>
<keyword id="KW-1185">Reference proteome</keyword>
<keyword id="KW-0812">Transmembrane</keyword>
<keyword id="KW-1133">Transmembrane helix</keyword>
<keyword id="KW-0813">Transport</keyword>
<evidence type="ECO:0000250" key="1"/>
<evidence type="ECO:0000255" key="2"/>
<evidence type="ECO:0000255" key="3">
    <source>
        <dbReference type="PROSITE-ProRule" id="PRU00441"/>
    </source>
</evidence>
<evidence type="ECO:0000305" key="4"/>